<gene>
    <name evidence="1" type="primary">metK</name>
    <name type="ordered locus">LVIS_1523</name>
</gene>
<keyword id="KW-0067">ATP-binding</keyword>
<keyword id="KW-0963">Cytoplasm</keyword>
<keyword id="KW-0460">Magnesium</keyword>
<keyword id="KW-0479">Metal-binding</keyword>
<keyword id="KW-0547">Nucleotide-binding</keyword>
<keyword id="KW-0554">One-carbon metabolism</keyword>
<keyword id="KW-0630">Potassium</keyword>
<keyword id="KW-1185">Reference proteome</keyword>
<keyword id="KW-0808">Transferase</keyword>
<evidence type="ECO:0000255" key="1">
    <source>
        <dbReference type="HAMAP-Rule" id="MF_00086"/>
    </source>
</evidence>
<dbReference type="EC" id="2.5.1.6" evidence="1"/>
<dbReference type="EMBL" id="CP000416">
    <property type="protein sequence ID" value="ABJ64618.1"/>
    <property type="molecule type" value="Genomic_DNA"/>
</dbReference>
<dbReference type="RefSeq" id="WP_011668244.1">
    <property type="nucleotide sequence ID" value="NC_008497.1"/>
</dbReference>
<dbReference type="SMR" id="Q03QA4"/>
<dbReference type="STRING" id="387344.LVIS_1523"/>
<dbReference type="KEGG" id="lbr:LVIS_1523"/>
<dbReference type="PATRIC" id="fig|387344.15.peg.1455"/>
<dbReference type="eggNOG" id="COG0192">
    <property type="taxonomic scope" value="Bacteria"/>
</dbReference>
<dbReference type="HOGENOM" id="CLU_041802_1_1_9"/>
<dbReference type="UniPathway" id="UPA00315">
    <property type="reaction ID" value="UER00080"/>
</dbReference>
<dbReference type="Proteomes" id="UP000001652">
    <property type="component" value="Chromosome"/>
</dbReference>
<dbReference type="GO" id="GO:0005737">
    <property type="term" value="C:cytoplasm"/>
    <property type="evidence" value="ECO:0007669"/>
    <property type="project" value="UniProtKB-SubCell"/>
</dbReference>
<dbReference type="GO" id="GO:0005524">
    <property type="term" value="F:ATP binding"/>
    <property type="evidence" value="ECO:0007669"/>
    <property type="project" value="UniProtKB-UniRule"/>
</dbReference>
<dbReference type="GO" id="GO:0000287">
    <property type="term" value="F:magnesium ion binding"/>
    <property type="evidence" value="ECO:0007669"/>
    <property type="project" value="UniProtKB-UniRule"/>
</dbReference>
<dbReference type="GO" id="GO:0004478">
    <property type="term" value="F:methionine adenosyltransferase activity"/>
    <property type="evidence" value="ECO:0007669"/>
    <property type="project" value="UniProtKB-UniRule"/>
</dbReference>
<dbReference type="GO" id="GO:0006730">
    <property type="term" value="P:one-carbon metabolic process"/>
    <property type="evidence" value="ECO:0007669"/>
    <property type="project" value="UniProtKB-KW"/>
</dbReference>
<dbReference type="GO" id="GO:0006556">
    <property type="term" value="P:S-adenosylmethionine biosynthetic process"/>
    <property type="evidence" value="ECO:0007669"/>
    <property type="project" value="UniProtKB-UniRule"/>
</dbReference>
<dbReference type="CDD" id="cd18079">
    <property type="entry name" value="S-AdoMet_synt"/>
    <property type="match status" value="1"/>
</dbReference>
<dbReference type="FunFam" id="3.30.300.10:FF:000001">
    <property type="entry name" value="S-adenosylmethionine synthase"/>
    <property type="match status" value="1"/>
</dbReference>
<dbReference type="FunFam" id="3.30.300.10:FF:000003">
    <property type="entry name" value="S-adenosylmethionine synthase"/>
    <property type="match status" value="1"/>
</dbReference>
<dbReference type="Gene3D" id="3.30.300.10">
    <property type="match status" value="3"/>
</dbReference>
<dbReference type="HAMAP" id="MF_00086">
    <property type="entry name" value="S_AdoMet_synth1"/>
    <property type="match status" value="1"/>
</dbReference>
<dbReference type="InterPro" id="IPR022631">
    <property type="entry name" value="ADOMET_SYNTHASE_CS"/>
</dbReference>
<dbReference type="InterPro" id="IPR022630">
    <property type="entry name" value="S-AdoMet_synt_C"/>
</dbReference>
<dbReference type="InterPro" id="IPR022629">
    <property type="entry name" value="S-AdoMet_synt_central"/>
</dbReference>
<dbReference type="InterPro" id="IPR022628">
    <property type="entry name" value="S-AdoMet_synt_N"/>
</dbReference>
<dbReference type="InterPro" id="IPR002133">
    <property type="entry name" value="S-AdoMet_synthetase"/>
</dbReference>
<dbReference type="InterPro" id="IPR022636">
    <property type="entry name" value="S-AdoMet_synthetase_sfam"/>
</dbReference>
<dbReference type="NCBIfam" id="TIGR01034">
    <property type="entry name" value="metK"/>
    <property type="match status" value="1"/>
</dbReference>
<dbReference type="PANTHER" id="PTHR11964">
    <property type="entry name" value="S-ADENOSYLMETHIONINE SYNTHETASE"/>
    <property type="match status" value="1"/>
</dbReference>
<dbReference type="Pfam" id="PF02773">
    <property type="entry name" value="S-AdoMet_synt_C"/>
    <property type="match status" value="1"/>
</dbReference>
<dbReference type="Pfam" id="PF02772">
    <property type="entry name" value="S-AdoMet_synt_M"/>
    <property type="match status" value="1"/>
</dbReference>
<dbReference type="Pfam" id="PF00438">
    <property type="entry name" value="S-AdoMet_synt_N"/>
    <property type="match status" value="1"/>
</dbReference>
<dbReference type="PIRSF" id="PIRSF000497">
    <property type="entry name" value="MAT"/>
    <property type="match status" value="1"/>
</dbReference>
<dbReference type="SUPFAM" id="SSF55973">
    <property type="entry name" value="S-adenosylmethionine synthetase"/>
    <property type="match status" value="3"/>
</dbReference>
<dbReference type="PROSITE" id="PS00376">
    <property type="entry name" value="ADOMET_SYNTHASE_1"/>
    <property type="match status" value="1"/>
</dbReference>
<dbReference type="PROSITE" id="PS00377">
    <property type="entry name" value="ADOMET_SYNTHASE_2"/>
    <property type="match status" value="1"/>
</dbReference>
<protein>
    <recommendedName>
        <fullName evidence="1">S-adenosylmethionine synthase</fullName>
        <shortName evidence="1">AdoMet synthase</shortName>
        <ecNumber evidence="1">2.5.1.6</ecNumber>
    </recommendedName>
    <alternativeName>
        <fullName evidence="1">MAT</fullName>
    </alternativeName>
    <alternativeName>
        <fullName evidence="1">Methionine adenosyltransferase</fullName>
    </alternativeName>
</protein>
<organism>
    <name type="scientific">Levilactobacillus brevis (strain ATCC 367 / BCRC 12310 / CIP 105137 / JCM 1170 / LMG 11437 / NCIMB 947 / NCTC 947)</name>
    <name type="common">Lactobacillus brevis</name>
    <dbReference type="NCBI Taxonomy" id="387344"/>
    <lineage>
        <taxon>Bacteria</taxon>
        <taxon>Bacillati</taxon>
        <taxon>Bacillota</taxon>
        <taxon>Bacilli</taxon>
        <taxon>Lactobacillales</taxon>
        <taxon>Lactobacillaceae</taxon>
        <taxon>Levilactobacillus</taxon>
    </lineage>
</organism>
<sequence>MQERHLFTSESVSEGHPDKIADQISDAILDALLAQDPDSRVACETSVTTGLVLVFGEISTKAYVDIQKVVRQTIKEIGYTDGQYGFDGDNCAVLVAIDEQSPDIAQGVDDSLETREGDADPLDQIGAGDQGLMFGYAVNETPELMPLPIELSHALMRRIAMLRKQAVLDYLRPDAKAEVTVEYDDNDQPLRVDTVVLSTQHDPDVTLDRIRQDVIEQVIKPTIPADLLDDQTKYFINPTGRFVIGGPQGDAGLTGRKIIVDTYGGAARHGGGAFSGKDATKVDRSASYAARYIAKNIVAAELAQKCEVQIAYAIGVAEPVSVYVNTFGTGTVAEAKLATAVRDLFDLRPAGIIQMLDLKRPIYKQTAAYGHFGRTDIDLPWEHTDKVDALKAACK</sequence>
<name>METK_LEVBA</name>
<comment type="function">
    <text evidence="1">Catalyzes the formation of S-adenosylmethionine (AdoMet) from methionine and ATP. The overall synthetic reaction is composed of two sequential steps, AdoMet formation and the subsequent tripolyphosphate hydrolysis which occurs prior to release of AdoMet from the enzyme.</text>
</comment>
<comment type="catalytic activity">
    <reaction evidence="1">
        <text>L-methionine + ATP + H2O = S-adenosyl-L-methionine + phosphate + diphosphate</text>
        <dbReference type="Rhea" id="RHEA:21080"/>
        <dbReference type="ChEBI" id="CHEBI:15377"/>
        <dbReference type="ChEBI" id="CHEBI:30616"/>
        <dbReference type="ChEBI" id="CHEBI:33019"/>
        <dbReference type="ChEBI" id="CHEBI:43474"/>
        <dbReference type="ChEBI" id="CHEBI:57844"/>
        <dbReference type="ChEBI" id="CHEBI:59789"/>
        <dbReference type="EC" id="2.5.1.6"/>
    </reaction>
</comment>
<comment type="cofactor">
    <cofactor evidence="1">
        <name>Mg(2+)</name>
        <dbReference type="ChEBI" id="CHEBI:18420"/>
    </cofactor>
    <text evidence="1">Binds 2 divalent ions per subunit.</text>
</comment>
<comment type="cofactor">
    <cofactor evidence="1">
        <name>K(+)</name>
        <dbReference type="ChEBI" id="CHEBI:29103"/>
    </cofactor>
    <text evidence="1">Binds 1 potassium ion per subunit.</text>
</comment>
<comment type="pathway">
    <text evidence="1">Amino-acid biosynthesis; S-adenosyl-L-methionine biosynthesis; S-adenosyl-L-methionine from L-methionine: step 1/1.</text>
</comment>
<comment type="subunit">
    <text evidence="1">Homotetramer; dimer of dimers.</text>
</comment>
<comment type="subcellular location">
    <subcellularLocation>
        <location evidence="1">Cytoplasm</location>
    </subcellularLocation>
</comment>
<comment type="similarity">
    <text evidence="1">Belongs to the AdoMet synthase family.</text>
</comment>
<reference key="1">
    <citation type="journal article" date="2006" name="Proc. Natl. Acad. Sci. U.S.A.">
        <title>Comparative genomics of the lactic acid bacteria.</title>
        <authorList>
            <person name="Makarova K.S."/>
            <person name="Slesarev A."/>
            <person name="Wolf Y.I."/>
            <person name="Sorokin A."/>
            <person name="Mirkin B."/>
            <person name="Koonin E.V."/>
            <person name="Pavlov A."/>
            <person name="Pavlova N."/>
            <person name="Karamychev V."/>
            <person name="Polouchine N."/>
            <person name="Shakhova V."/>
            <person name="Grigoriev I."/>
            <person name="Lou Y."/>
            <person name="Rohksar D."/>
            <person name="Lucas S."/>
            <person name="Huang K."/>
            <person name="Goodstein D.M."/>
            <person name="Hawkins T."/>
            <person name="Plengvidhya V."/>
            <person name="Welker D."/>
            <person name="Hughes J."/>
            <person name="Goh Y."/>
            <person name="Benson A."/>
            <person name="Baldwin K."/>
            <person name="Lee J.-H."/>
            <person name="Diaz-Muniz I."/>
            <person name="Dosti B."/>
            <person name="Smeianov V."/>
            <person name="Wechter W."/>
            <person name="Barabote R."/>
            <person name="Lorca G."/>
            <person name="Altermann E."/>
            <person name="Barrangou R."/>
            <person name="Ganesan B."/>
            <person name="Xie Y."/>
            <person name="Rawsthorne H."/>
            <person name="Tamir D."/>
            <person name="Parker C."/>
            <person name="Breidt F."/>
            <person name="Broadbent J.R."/>
            <person name="Hutkins R."/>
            <person name="O'Sullivan D."/>
            <person name="Steele J."/>
            <person name="Unlu G."/>
            <person name="Saier M.H. Jr."/>
            <person name="Klaenhammer T."/>
            <person name="Richardson P."/>
            <person name="Kozyavkin S."/>
            <person name="Weimer B.C."/>
            <person name="Mills D.A."/>
        </authorList>
    </citation>
    <scope>NUCLEOTIDE SEQUENCE [LARGE SCALE GENOMIC DNA]</scope>
    <source>
        <strain>ATCC 367 / BCRC 12310 / CIP 105137 / JCM 1170 / LMG 11437 / NCIMB 947 / NCTC 947</strain>
    </source>
</reference>
<feature type="chain" id="PRO_0000302926" description="S-adenosylmethionine synthase">
    <location>
        <begin position="1"/>
        <end position="395"/>
    </location>
</feature>
<feature type="region of interest" description="Flexible loop" evidence="1">
    <location>
        <begin position="100"/>
        <end position="110"/>
    </location>
</feature>
<feature type="binding site" description="in other chain" evidence="1">
    <location>
        <position position="16"/>
    </location>
    <ligand>
        <name>ATP</name>
        <dbReference type="ChEBI" id="CHEBI:30616"/>
        <note>ligand shared between two neighboring subunits</note>
    </ligand>
</feature>
<feature type="binding site" evidence="1">
    <location>
        <position position="18"/>
    </location>
    <ligand>
        <name>Mg(2+)</name>
        <dbReference type="ChEBI" id="CHEBI:18420"/>
    </ligand>
</feature>
<feature type="binding site" evidence="1">
    <location>
        <position position="44"/>
    </location>
    <ligand>
        <name>K(+)</name>
        <dbReference type="ChEBI" id="CHEBI:29103"/>
    </ligand>
</feature>
<feature type="binding site" description="in other chain" evidence="1">
    <location>
        <position position="57"/>
    </location>
    <ligand>
        <name>L-methionine</name>
        <dbReference type="ChEBI" id="CHEBI:57844"/>
        <note>ligand shared between two neighboring subunits</note>
    </ligand>
</feature>
<feature type="binding site" description="in other chain" evidence="1">
    <location>
        <position position="100"/>
    </location>
    <ligand>
        <name>L-methionine</name>
        <dbReference type="ChEBI" id="CHEBI:57844"/>
        <note>ligand shared between two neighboring subunits</note>
    </ligand>
</feature>
<feature type="binding site" description="in other chain" evidence="1">
    <location>
        <begin position="174"/>
        <end position="176"/>
    </location>
    <ligand>
        <name>ATP</name>
        <dbReference type="ChEBI" id="CHEBI:30616"/>
        <note>ligand shared between two neighboring subunits</note>
    </ligand>
</feature>
<feature type="binding site" description="in other chain" evidence="1">
    <location>
        <begin position="241"/>
        <end position="242"/>
    </location>
    <ligand>
        <name>ATP</name>
        <dbReference type="ChEBI" id="CHEBI:30616"/>
        <note>ligand shared between two neighboring subunits</note>
    </ligand>
</feature>
<feature type="binding site" evidence="1">
    <location>
        <position position="250"/>
    </location>
    <ligand>
        <name>ATP</name>
        <dbReference type="ChEBI" id="CHEBI:30616"/>
        <note>ligand shared between two neighboring subunits</note>
    </ligand>
</feature>
<feature type="binding site" evidence="1">
    <location>
        <position position="250"/>
    </location>
    <ligand>
        <name>L-methionine</name>
        <dbReference type="ChEBI" id="CHEBI:57844"/>
        <note>ligand shared between two neighboring subunits</note>
    </ligand>
</feature>
<feature type="binding site" description="in other chain" evidence="1">
    <location>
        <begin position="256"/>
        <end position="257"/>
    </location>
    <ligand>
        <name>ATP</name>
        <dbReference type="ChEBI" id="CHEBI:30616"/>
        <note>ligand shared between two neighboring subunits</note>
    </ligand>
</feature>
<feature type="binding site" evidence="1">
    <location>
        <position position="273"/>
    </location>
    <ligand>
        <name>ATP</name>
        <dbReference type="ChEBI" id="CHEBI:30616"/>
        <note>ligand shared between two neighboring subunits</note>
    </ligand>
</feature>
<feature type="binding site" evidence="1">
    <location>
        <position position="277"/>
    </location>
    <ligand>
        <name>ATP</name>
        <dbReference type="ChEBI" id="CHEBI:30616"/>
        <note>ligand shared between two neighboring subunits</note>
    </ligand>
</feature>
<feature type="binding site" description="in other chain" evidence="1">
    <location>
        <position position="281"/>
    </location>
    <ligand>
        <name>L-methionine</name>
        <dbReference type="ChEBI" id="CHEBI:57844"/>
        <note>ligand shared between two neighboring subunits</note>
    </ligand>
</feature>
<accession>Q03QA4</accession>
<proteinExistence type="inferred from homology"/>